<organism>
    <name type="scientific">Ehrlichia canis (strain Jake)</name>
    <dbReference type="NCBI Taxonomy" id="269484"/>
    <lineage>
        <taxon>Bacteria</taxon>
        <taxon>Pseudomonadati</taxon>
        <taxon>Pseudomonadota</taxon>
        <taxon>Alphaproteobacteria</taxon>
        <taxon>Rickettsiales</taxon>
        <taxon>Anaplasmataceae</taxon>
        <taxon>Ehrlichia</taxon>
    </lineage>
</organism>
<keyword id="KW-0021">Allosteric enzyme</keyword>
<keyword id="KW-0067">ATP-binding</keyword>
<keyword id="KW-0963">Cytoplasm</keyword>
<keyword id="KW-0418">Kinase</keyword>
<keyword id="KW-0547">Nucleotide-binding</keyword>
<keyword id="KW-0665">Pyrimidine biosynthesis</keyword>
<keyword id="KW-0808">Transferase</keyword>
<sequence length="244" mass="26515">MSESSTPNVKYSRVLLKVSGEALMGEKGFGCDVEVLDKLSHDLKEVYDFGIQLCLVVGGGNIFRGASSSSPFGFERASNDYIGMLATMMNALSLQNALEKINVQSRVLSAIPITAVCETYIRRRAIRHLEKGRVVICAAGVGNPFFTTDTAAALRGIEMGCDAIFKGTQVDGVYSADPKKTVDAVRYDRISYRDLLSLDLKIMDVAAVSLAREHSVPIIVFNLGKRGSFADIIRGRGLYTTICN</sequence>
<feature type="chain" id="PRO_0000323841" description="Uridylate kinase">
    <location>
        <begin position="1"/>
        <end position="244"/>
    </location>
</feature>
<feature type="region of interest" description="Involved in allosteric activation by GTP" evidence="1">
    <location>
        <begin position="25"/>
        <end position="30"/>
    </location>
</feature>
<feature type="binding site" evidence="1">
    <location>
        <begin position="17"/>
        <end position="20"/>
    </location>
    <ligand>
        <name>ATP</name>
        <dbReference type="ChEBI" id="CHEBI:30616"/>
    </ligand>
</feature>
<feature type="binding site" evidence="1">
    <location>
        <position position="59"/>
    </location>
    <ligand>
        <name>UMP</name>
        <dbReference type="ChEBI" id="CHEBI:57865"/>
    </ligand>
</feature>
<feature type="binding site" evidence="1">
    <location>
        <position position="60"/>
    </location>
    <ligand>
        <name>ATP</name>
        <dbReference type="ChEBI" id="CHEBI:30616"/>
    </ligand>
</feature>
<feature type="binding site" evidence="1">
    <location>
        <position position="64"/>
    </location>
    <ligand>
        <name>ATP</name>
        <dbReference type="ChEBI" id="CHEBI:30616"/>
    </ligand>
</feature>
<feature type="binding site" evidence="1">
    <location>
        <position position="80"/>
    </location>
    <ligand>
        <name>UMP</name>
        <dbReference type="ChEBI" id="CHEBI:57865"/>
    </ligand>
</feature>
<feature type="binding site" evidence="1">
    <location>
        <begin position="141"/>
        <end position="148"/>
    </location>
    <ligand>
        <name>UMP</name>
        <dbReference type="ChEBI" id="CHEBI:57865"/>
    </ligand>
</feature>
<feature type="binding site" evidence="1">
    <location>
        <position position="168"/>
    </location>
    <ligand>
        <name>ATP</name>
        <dbReference type="ChEBI" id="CHEBI:30616"/>
    </ligand>
</feature>
<feature type="binding site" evidence="1">
    <location>
        <position position="169"/>
    </location>
    <ligand>
        <name>ATP</name>
        <dbReference type="ChEBI" id="CHEBI:30616"/>
    </ligand>
</feature>
<feature type="binding site" evidence="1">
    <location>
        <position position="174"/>
    </location>
    <ligand>
        <name>ATP</name>
        <dbReference type="ChEBI" id="CHEBI:30616"/>
    </ligand>
</feature>
<feature type="binding site" evidence="1">
    <location>
        <position position="177"/>
    </location>
    <ligand>
        <name>ATP</name>
        <dbReference type="ChEBI" id="CHEBI:30616"/>
    </ligand>
</feature>
<comment type="function">
    <text evidence="1">Catalyzes the reversible phosphorylation of UMP to UDP.</text>
</comment>
<comment type="catalytic activity">
    <reaction evidence="1">
        <text>UMP + ATP = UDP + ADP</text>
        <dbReference type="Rhea" id="RHEA:24400"/>
        <dbReference type="ChEBI" id="CHEBI:30616"/>
        <dbReference type="ChEBI" id="CHEBI:57865"/>
        <dbReference type="ChEBI" id="CHEBI:58223"/>
        <dbReference type="ChEBI" id="CHEBI:456216"/>
        <dbReference type="EC" id="2.7.4.22"/>
    </reaction>
</comment>
<comment type="activity regulation">
    <text evidence="1">Allosterically activated by GTP. Inhibited by UTP.</text>
</comment>
<comment type="pathway">
    <text evidence="1">Pyrimidine metabolism; CTP biosynthesis via de novo pathway; UDP from UMP (UMPK route): step 1/1.</text>
</comment>
<comment type="subunit">
    <text evidence="1">Homohexamer.</text>
</comment>
<comment type="subcellular location">
    <subcellularLocation>
        <location evidence="1">Cytoplasm</location>
    </subcellularLocation>
</comment>
<comment type="similarity">
    <text evidence="1">Belongs to the UMP kinase family.</text>
</comment>
<protein>
    <recommendedName>
        <fullName evidence="1">Uridylate kinase</fullName>
        <shortName evidence="1">UK</shortName>
        <ecNumber evidence="1">2.7.4.22</ecNumber>
    </recommendedName>
    <alternativeName>
        <fullName evidence="1">Uridine monophosphate kinase</fullName>
        <shortName evidence="1">UMP kinase</shortName>
        <shortName evidence="1">UMPK</shortName>
    </alternativeName>
</protein>
<name>PYRH_EHRCJ</name>
<accession>Q3YR64</accession>
<reference key="1">
    <citation type="journal article" date="2006" name="J. Bacteriol.">
        <title>The genome of the obligately intracellular bacterium Ehrlichia canis reveals themes of complex membrane structure and immune evasion strategies.</title>
        <authorList>
            <person name="Mavromatis K."/>
            <person name="Doyle C.K."/>
            <person name="Lykidis A."/>
            <person name="Ivanova N."/>
            <person name="Francino M.P."/>
            <person name="Chain P."/>
            <person name="Shin M."/>
            <person name="Malfatti S."/>
            <person name="Larimer F."/>
            <person name="Copeland A."/>
            <person name="Detter J.C."/>
            <person name="Land M."/>
            <person name="Richardson P.M."/>
            <person name="Yu X.J."/>
            <person name="Walker D.H."/>
            <person name="McBride J.W."/>
            <person name="Kyrpides N.C."/>
        </authorList>
    </citation>
    <scope>NUCLEOTIDE SEQUENCE [LARGE SCALE GENOMIC DNA]</scope>
    <source>
        <strain>Jake</strain>
    </source>
</reference>
<evidence type="ECO:0000255" key="1">
    <source>
        <dbReference type="HAMAP-Rule" id="MF_01220"/>
    </source>
</evidence>
<gene>
    <name evidence="1" type="primary">pyrH</name>
    <name type="ordered locus">Ecaj_0759</name>
</gene>
<proteinExistence type="inferred from homology"/>
<dbReference type="EC" id="2.7.4.22" evidence="1"/>
<dbReference type="EMBL" id="CP000107">
    <property type="protein sequence ID" value="AAZ68791.1"/>
    <property type="molecule type" value="Genomic_DNA"/>
</dbReference>
<dbReference type="RefSeq" id="WP_011304868.1">
    <property type="nucleotide sequence ID" value="NC_007354.1"/>
</dbReference>
<dbReference type="SMR" id="Q3YR64"/>
<dbReference type="FunCoup" id="Q3YR64">
    <property type="interactions" value="357"/>
</dbReference>
<dbReference type="STRING" id="269484.Ecaj_0759"/>
<dbReference type="KEGG" id="ecn:Ecaj_0759"/>
<dbReference type="eggNOG" id="COG0528">
    <property type="taxonomic scope" value="Bacteria"/>
</dbReference>
<dbReference type="HOGENOM" id="CLU_033861_0_0_5"/>
<dbReference type="InParanoid" id="Q3YR64"/>
<dbReference type="UniPathway" id="UPA00159">
    <property type="reaction ID" value="UER00275"/>
</dbReference>
<dbReference type="Proteomes" id="UP000000435">
    <property type="component" value="Chromosome"/>
</dbReference>
<dbReference type="GO" id="GO:0005829">
    <property type="term" value="C:cytosol"/>
    <property type="evidence" value="ECO:0007669"/>
    <property type="project" value="TreeGrafter"/>
</dbReference>
<dbReference type="GO" id="GO:0005524">
    <property type="term" value="F:ATP binding"/>
    <property type="evidence" value="ECO:0007669"/>
    <property type="project" value="UniProtKB-KW"/>
</dbReference>
<dbReference type="GO" id="GO:0033862">
    <property type="term" value="F:UMP kinase activity"/>
    <property type="evidence" value="ECO:0007669"/>
    <property type="project" value="UniProtKB-EC"/>
</dbReference>
<dbReference type="GO" id="GO:0044210">
    <property type="term" value="P:'de novo' CTP biosynthetic process"/>
    <property type="evidence" value="ECO:0007669"/>
    <property type="project" value="UniProtKB-UniRule"/>
</dbReference>
<dbReference type="GO" id="GO:0006225">
    <property type="term" value="P:UDP biosynthetic process"/>
    <property type="evidence" value="ECO:0007669"/>
    <property type="project" value="TreeGrafter"/>
</dbReference>
<dbReference type="CDD" id="cd04254">
    <property type="entry name" value="AAK_UMPK-PyrH-Ec"/>
    <property type="match status" value="1"/>
</dbReference>
<dbReference type="FunFam" id="3.40.1160.10:FF:000001">
    <property type="entry name" value="Uridylate kinase"/>
    <property type="match status" value="1"/>
</dbReference>
<dbReference type="Gene3D" id="3.40.1160.10">
    <property type="entry name" value="Acetylglutamate kinase-like"/>
    <property type="match status" value="1"/>
</dbReference>
<dbReference type="HAMAP" id="MF_01220_B">
    <property type="entry name" value="PyrH_B"/>
    <property type="match status" value="1"/>
</dbReference>
<dbReference type="InterPro" id="IPR036393">
    <property type="entry name" value="AceGlu_kinase-like_sf"/>
</dbReference>
<dbReference type="InterPro" id="IPR001048">
    <property type="entry name" value="Asp/Glu/Uridylate_kinase"/>
</dbReference>
<dbReference type="InterPro" id="IPR011817">
    <property type="entry name" value="Uridylate_kinase"/>
</dbReference>
<dbReference type="InterPro" id="IPR015963">
    <property type="entry name" value="Uridylate_kinase_bac"/>
</dbReference>
<dbReference type="NCBIfam" id="TIGR02075">
    <property type="entry name" value="pyrH_bact"/>
    <property type="match status" value="1"/>
</dbReference>
<dbReference type="PANTHER" id="PTHR42833">
    <property type="entry name" value="URIDYLATE KINASE"/>
    <property type="match status" value="1"/>
</dbReference>
<dbReference type="PANTHER" id="PTHR42833:SF4">
    <property type="entry name" value="URIDYLATE KINASE PUMPKIN, CHLOROPLASTIC"/>
    <property type="match status" value="1"/>
</dbReference>
<dbReference type="Pfam" id="PF00696">
    <property type="entry name" value="AA_kinase"/>
    <property type="match status" value="1"/>
</dbReference>
<dbReference type="PIRSF" id="PIRSF005650">
    <property type="entry name" value="Uridylate_kin"/>
    <property type="match status" value="1"/>
</dbReference>
<dbReference type="SUPFAM" id="SSF53633">
    <property type="entry name" value="Carbamate kinase-like"/>
    <property type="match status" value="1"/>
</dbReference>